<sequence>MLKVAALYQFTPLPDFRALREPLRELCAAHAIKGSILLAAEGINGTVAGTPRAIDALVSELQTGALFSGRLNDLELKFSQASAMPFARLKVRLKKEIVTLGDPATDPTRAVGIYVDPQDWNELIATPDTILLDVRNDFEVVMGSFEGAIDPQLARFGQFKDFAAQELDHRKHRRIAMYCTGGIRCEKASSYLLSRGFKEVYHLKGGILKYLEQIPESESRWRGECFVFDDRIALGHGLKESRQASPVMDGAPHDD</sequence>
<comment type="function">
    <text evidence="1">Catalyzes oxygen-dependent 5-hydroxyuridine (ho5U) modification at position 34 in tRNAs.</text>
</comment>
<comment type="catalytic activity">
    <reaction evidence="1">
        <text>uridine(34) in tRNA + AH2 + O2 = 5-hydroxyuridine(34) in tRNA + A + H2O</text>
        <dbReference type="Rhea" id="RHEA:64224"/>
        <dbReference type="Rhea" id="RHEA-COMP:11727"/>
        <dbReference type="Rhea" id="RHEA-COMP:13381"/>
        <dbReference type="ChEBI" id="CHEBI:13193"/>
        <dbReference type="ChEBI" id="CHEBI:15377"/>
        <dbReference type="ChEBI" id="CHEBI:15379"/>
        <dbReference type="ChEBI" id="CHEBI:17499"/>
        <dbReference type="ChEBI" id="CHEBI:65315"/>
        <dbReference type="ChEBI" id="CHEBI:136877"/>
    </reaction>
</comment>
<comment type="similarity">
    <text evidence="1">Belongs to the TrhO family.</text>
</comment>
<proteinExistence type="inferred from homology"/>
<reference key="1">
    <citation type="journal article" date="2006" name="Appl. Environ. Microbiol.">
        <title>Genome sequence of the chemolithoautotrophic nitrite-oxidizing bacterium Nitrobacter winogradskyi Nb-255.</title>
        <authorList>
            <person name="Starkenburg S.R."/>
            <person name="Chain P.S.G."/>
            <person name="Sayavedra-Soto L.A."/>
            <person name="Hauser L."/>
            <person name="Land M.L."/>
            <person name="Larimer F.W."/>
            <person name="Malfatti S.A."/>
            <person name="Klotz M.G."/>
            <person name="Bottomley P.J."/>
            <person name="Arp D.J."/>
            <person name="Hickey W.J."/>
        </authorList>
    </citation>
    <scope>NUCLEOTIDE SEQUENCE [LARGE SCALE GENOMIC DNA]</scope>
    <source>
        <strain>ATCC 25391 / DSM 10237 / CIP 104748 / NCIMB 11846 / Nb-255</strain>
    </source>
</reference>
<accession>Q3SN93</accession>
<gene>
    <name evidence="1" type="primary">trhO</name>
    <name type="ordered locus">Nwi_2998</name>
</gene>
<evidence type="ECO:0000255" key="1">
    <source>
        <dbReference type="HAMAP-Rule" id="MF_00469"/>
    </source>
</evidence>
<feature type="chain" id="PRO_0000242926" description="tRNA uridine(34) hydroxylase">
    <location>
        <begin position="1"/>
        <end position="255"/>
    </location>
</feature>
<feature type="domain" description="Rhodanese" evidence="1">
    <location>
        <begin position="125"/>
        <end position="219"/>
    </location>
</feature>
<feature type="active site" description="Cysteine persulfide intermediate" evidence="1">
    <location>
        <position position="179"/>
    </location>
</feature>
<organism>
    <name type="scientific">Nitrobacter winogradskyi (strain ATCC 25391 / DSM 10237 / CIP 104748 / NCIMB 11846 / Nb-255)</name>
    <dbReference type="NCBI Taxonomy" id="323098"/>
    <lineage>
        <taxon>Bacteria</taxon>
        <taxon>Pseudomonadati</taxon>
        <taxon>Pseudomonadota</taxon>
        <taxon>Alphaproteobacteria</taxon>
        <taxon>Hyphomicrobiales</taxon>
        <taxon>Nitrobacteraceae</taxon>
        <taxon>Nitrobacter</taxon>
    </lineage>
</organism>
<protein>
    <recommendedName>
        <fullName evidence="1">tRNA uridine(34) hydroxylase</fullName>
        <ecNumber evidence="1">1.14.-.-</ecNumber>
    </recommendedName>
    <alternativeName>
        <fullName evidence="1">tRNA hydroxylation protein O</fullName>
    </alternativeName>
</protein>
<keyword id="KW-0560">Oxidoreductase</keyword>
<keyword id="KW-1185">Reference proteome</keyword>
<keyword id="KW-0819">tRNA processing</keyword>
<name>TRHO_NITWN</name>
<dbReference type="EC" id="1.14.-.-" evidence="1"/>
<dbReference type="EMBL" id="CP000115">
    <property type="protein sequence ID" value="ABA06248.1"/>
    <property type="molecule type" value="Genomic_DNA"/>
</dbReference>
<dbReference type="RefSeq" id="WP_011316170.1">
    <property type="nucleotide sequence ID" value="NC_007406.1"/>
</dbReference>
<dbReference type="SMR" id="Q3SN93"/>
<dbReference type="STRING" id="323098.Nwi_2998"/>
<dbReference type="KEGG" id="nwi:Nwi_2998"/>
<dbReference type="eggNOG" id="COG1054">
    <property type="taxonomic scope" value="Bacteria"/>
</dbReference>
<dbReference type="HOGENOM" id="CLU_038878_0_1_5"/>
<dbReference type="OrthoDB" id="9778326at2"/>
<dbReference type="Proteomes" id="UP000002531">
    <property type="component" value="Chromosome"/>
</dbReference>
<dbReference type="GO" id="GO:0016705">
    <property type="term" value="F:oxidoreductase activity, acting on paired donors, with incorporation or reduction of molecular oxygen"/>
    <property type="evidence" value="ECO:0007669"/>
    <property type="project" value="UniProtKB-UniRule"/>
</dbReference>
<dbReference type="GO" id="GO:0006400">
    <property type="term" value="P:tRNA modification"/>
    <property type="evidence" value="ECO:0007669"/>
    <property type="project" value="UniProtKB-UniRule"/>
</dbReference>
<dbReference type="CDD" id="cd01518">
    <property type="entry name" value="RHOD_YceA"/>
    <property type="match status" value="1"/>
</dbReference>
<dbReference type="Gene3D" id="3.30.70.100">
    <property type="match status" value="1"/>
</dbReference>
<dbReference type="Gene3D" id="3.40.250.10">
    <property type="entry name" value="Rhodanese-like domain"/>
    <property type="match status" value="1"/>
</dbReference>
<dbReference type="HAMAP" id="MF_00469">
    <property type="entry name" value="TrhO"/>
    <property type="match status" value="1"/>
</dbReference>
<dbReference type="InterPro" id="IPR001763">
    <property type="entry name" value="Rhodanese-like_dom"/>
</dbReference>
<dbReference type="InterPro" id="IPR036873">
    <property type="entry name" value="Rhodanese-like_dom_sf"/>
</dbReference>
<dbReference type="InterPro" id="IPR020936">
    <property type="entry name" value="TrhO"/>
</dbReference>
<dbReference type="InterPro" id="IPR040503">
    <property type="entry name" value="TRHO_N"/>
</dbReference>
<dbReference type="NCBIfam" id="NF001136">
    <property type="entry name" value="PRK00142.1-4"/>
    <property type="match status" value="1"/>
</dbReference>
<dbReference type="PANTHER" id="PTHR43268:SF3">
    <property type="entry name" value="RHODANESE-LIKE DOMAIN-CONTAINING PROTEIN 7-RELATED"/>
    <property type="match status" value="1"/>
</dbReference>
<dbReference type="PANTHER" id="PTHR43268">
    <property type="entry name" value="THIOSULFATE SULFURTRANSFERASE/RHODANESE-LIKE DOMAIN-CONTAINING PROTEIN 2"/>
    <property type="match status" value="1"/>
</dbReference>
<dbReference type="Pfam" id="PF00581">
    <property type="entry name" value="Rhodanese"/>
    <property type="match status" value="1"/>
</dbReference>
<dbReference type="Pfam" id="PF17773">
    <property type="entry name" value="UPF0176_N"/>
    <property type="match status" value="1"/>
</dbReference>
<dbReference type="SMART" id="SM00450">
    <property type="entry name" value="RHOD"/>
    <property type="match status" value="1"/>
</dbReference>
<dbReference type="SUPFAM" id="SSF52821">
    <property type="entry name" value="Rhodanese/Cell cycle control phosphatase"/>
    <property type="match status" value="1"/>
</dbReference>
<dbReference type="PROSITE" id="PS50206">
    <property type="entry name" value="RHODANESE_3"/>
    <property type="match status" value="1"/>
</dbReference>